<reference key="1">
    <citation type="submission" date="2006-07" db="EMBL/GenBank/DDBJ databases">
        <authorList>
            <consortium name="Sanger Xenopus tropicalis EST/cDNA project"/>
        </authorList>
    </citation>
    <scope>NUCLEOTIDE SEQUENCE [LARGE SCALE MRNA]</scope>
    <source>
        <tissue>Neurula</tissue>
    </source>
</reference>
<reference key="2">
    <citation type="submission" date="2008-01" db="EMBL/GenBank/DDBJ databases">
        <authorList>
            <consortium name="NIH - Xenopus Gene Collection (XGC) project"/>
        </authorList>
    </citation>
    <scope>NUCLEOTIDE SEQUENCE [LARGE SCALE MRNA] OF 5-314</scope>
    <source>
        <tissue>Embryo</tissue>
    </source>
</reference>
<evidence type="ECO:0000255" key="1"/>
<evidence type="ECO:0000305" key="2"/>
<name>CC42M_XENTR</name>
<organism>
    <name type="scientific">Xenopus tropicalis</name>
    <name type="common">Western clawed frog</name>
    <name type="synonym">Silurana tropicalis</name>
    <dbReference type="NCBI Taxonomy" id="8364"/>
    <lineage>
        <taxon>Eukaryota</taxon>
        <taxon>Metazoa</taxon>
        <taxon>Chordata</taxon>
        <taxon>Craniata</taxon>
        <taxon>Vertebrata</taxon>
        <taxon>Euteleostomi</taxon>
        <taxon>Amphibia</taxon>
        <taxon>Batrachia</taxon>
        <taxon>Anura</taxon>
        <taxon>Pipoidea</taxon>
        <taxon>Pipidae</taxon>
        <taxon>Xenopodinae</taxon>
        <taxon>Xenopus</taxon>
        <taxon>Silurana</taxon>
    </lineage>
</organism>
<dbReference type="EMBL" id="CU025065">
    <property type="status" value="NOT_ANNOTATED_CDS"/>
    <property type="molecule type" value="mRNA"/>
</dbReference>
<dbReference type="EMBL" id="BC158451">
    <property type="protein sequence ID" value="AAI58452.1"/>
    <property type="molecule type" value="mRNA"/>
</dbReference>
<dbReference type="SMR" id="B0BMJ2"/>
<dbReference type="FunCoup" id="B0BMJ2">
    <property type="interactions" value="32"/>
</dbReference>
<dbReference type="STRING" id="8364.ENSXETP00000025507"/>
<dbReference type="PaxDb" id="8364-ENSXETP00000035820"/>
<dbReference type="KEGG" id="xtr:100145050"/>
<dbReference type="AGR" id="Xenbase:XB-GENE-5779653"/>
<dbReference type="CTD" id="387885"/>
<dbReference type="Xenbase" id="XB-GENE-5779653">
    <property type="gene designation" value="cfap73"/>
</dbReference>
<dbReference type="eggNOG" id="ENOG502QRZS">
    <property type="taxonomic scope" value="Eukaryota"/>
</dbReference>
<dbReference type="HOGENOM" id="CLU_061472_2_1_1"/>
<dbReference type="InParanoid" id="B0BMJ2"/>
<dbReference type="OMA" id="SIEMLYI"/>
<dbReference type="OrthoDB" id="10264298at2759"/>
<dbReference type="PhylomeDB" id="B0BMJ2"/>
<dbReference type="TreeFam" id="TF327270"/>
<dbReference type="Proteomes" id="UP000008143">
    <property type="component" value="Chromosome 1"/>
</dbReference>
<dbReference type="Bgee" id="ENSXETG00000016411">
    <property type="expression patterns" value="Expressed in neurula embryo and 9 other cell types or tissues"/>
</dbReference>
<dbReference type="ExpressionAtlas" id="B0BMJ2">
    <property type="expression patterns" value="differential"/>
</dbReference>
<dbReference type="GO" id="GO:0005856">
    <property type="term" value="C:cytoskeleton"/>
    <property type="evidence" value="ECO:0007669"/>
    <property type="project" value="UniProtKB-ARBA"/>
</dbReference>
<dbReference type="InterPro" id="IPR051147">
    <property type="entry name" value="CFAP_domain-containing"/>
</dbReference>
<dbReference type="InterPro" id="IPR025252">
    <property type="entry name" value="DUF4200"/>
</dbReference>
<dbReference type="PANTHER" id="PTHR21683:SF15">
    <property type="entry name" value="COILED-COIL DOMAIN-CONTAINING PROTEIN 42 LIKE-2"/>
    <property type="match status" value="1"/>
</dbReference>
<dbReference type="PANTHER" id="PTHR21683">
    <property type="entry name" value="COILED-COIL DOMAIN-CONTAINING PROTEIN 42 LIKE-2-LIKE-RELATED"/>
    <property type="match status" value="1"/>
</dbReference>
<dbReference type="Pfam" id="PF13863">
    <property type="entry name" value="DUF4200"/>
    <property type="match status" value="1"/>
</dbReference>
<keyword id="KW-0175">Coiled coil</keyword>
<keyword id="KW-1185">Reference proteome</keyword>
<accession>B0BMJ2</accession>
<feature type="chain" id="PRO_0000343717" description="Coiled-coil domain-containing protein 42 like-2">
    <location>
        <begin position="1"/>
        <end position="314"/>
    </location>
</feature>
<feature type="coiled-coil region" evidence="1">
    <location>
        <begin position="34"/>
        <end position="133"/>
    </location>
</feature>
<feature type="coiled-coil region" evidence="1">
    <location>
        <begin position="175"/>
        <end position="231"/>
    </location>
</feature>
<sequence length="314" mass="37303">MEFDLGEYFRAAFEDKLLVKMPDREDDFLTPATRLLEKRREMVEVEQALSTQKEEFQMKSESLQQRRAELELKEEKLKDSLFKFDKFLKENDSKRKRALHKAAEERQLAAHKEREALRLQAENTQLMQRKGTLLERQEKNSKYQQYLQRVLERTDEFQEVQEMIDRFNTLMATQNKLLKRDLENQELAEREKARLLHYQEETRSQILELNNQIAQLQGELERVRAVAFQWESRWAQIQNTAAENTLRLGRIRMSTLNLFQTISKQMRLKTEISVEDTEAQLEKIQICFEDLSAIYKDLKKAGTTPQTPAVPTTN</sequence>
<protein>
    <recommendedName>
        <fullName evidence="2">Coiled-coil domain-containing protein 42 like-2</fullName>
    </recommendedName>
</protein>
<gene>
    <name type="ORF">TNeu058c09.1</name>
</gene>
<comment type="similarity">
    <text evidence="2">Belongs to the CFAP73 family.</text>
</comment>
<proteinExistence type="evidence at transcript level"/>